<feature type="signal peptide" evidence="2">
    <location>
        <begin position="1"/>
        <end position="20"/>
    </location>
</feature>
<feature type="propeptide" id="PRO_0000398312" evidence="10">
    <location>
        <begin position="21"/>
        <end position="36"/>
    </location>
</feature>
<feature type="chain" id="PRO_5000319668" description="N.vectensis toxin 1 1" evidence="11">
    <location>
        <begin position="39"/>
        <end position="85"/>
    </location>
</feature>
<feature type="disulfide bond" evidence="1">
    <location>
        <begin position="42"/>
        <end position="82"/>
    </location>
</feature>
<feature type="disulfide bond" evidence="1">
    <location>
        <begin position="44"/>
        <end position="72"/>
    </location>
</feature>
<feature type="disulfide bond" evidence="1">
    <location>
        <begin position="65"/>
        <end position="83"/>
    </location>
</feature>
<feature type="splice variant" id="VSP_039746" description="In isoform 2." evidence="10">
    <original>RDMMSDDELDFHLSKRGIPCACDSDGPDIRSASLSGIVWMGSCPSGWKKCKSYYSIVADCCNQ</original>
    <variation>K</variation>
    <location>
        <begin position="23"/>
        <end position="85"/>
    </location>
</feature>
<feature type="sequence variant" description="In Nv3-2.">
    <original>K</original>
    <variation>N</variation>
    <location>
        <position position="5"/>
    </location>
</feature>
<feature type="sequence variant" description="In Nv1-10.">
    <original>V</original>
    <variation>A</variation>
    <location>
        <position position="9"/>
    </location>
</feature>
<feature type="sequence variant" description="In Nv1-10 and Nv3-2.">
    <original>F</original>
    <variation>Y</variation>
    <location>
        <position position="33"/>
    </location>
</feature>
<feature type="sequence variant" description="In Nv3-2.">
    <original>IP</original>
    <variation>FA</variation>
    <location>
        <begin position="40"/>
        <end position="41"/>
    </location>
</feature>
<feature type="sequence variant" description="In Nv3-2.">
    <original>DGPDIR</original>
    <variation>PGIG</variation>
    <location>
        <begin position="47"/>
        <end position="52"/>
    </location>
</feature>
<feature type="sequence variant" description="In Nv1-10.">
    <original>M</original>
    <variation>V</variation>
    <location>
        <position position="62"/>
    </location>
</feature>
<protein>
    <recommendedName>
        <fullName evidence="8">N.vectensis toxin 1 1</fullName>
        <shortName evidence="8">Nv1</shortName>
    </recommendedName>
    <alternativeName>
        <fullName evidence="9">Delta-edwarditoxin-Nvc1b</fullName>
        <shortName evidence="9">Delta-EWTX-Nvc1b</shortName>
    </alternativeName>
    <alternativeName>
        <fullName evidence="7 12">Neurotoxin Nv1-10</fullName>
    </alternativeName>
    <alternativeName>
        <fullName evidence="7">Neurotoxin Nv1-116.25.1</fullName>
    </alternativeName>
    <alternativeName>
        <fullName evidence="7 13">Neurotoxin Nv3-2</fullName>
    </alternativeName>
</protein>
<keyword id="KW-0025">Alternative splicing</keyword>
<keyword id="KW-0165">Cleavage on pair of basic residues</keyword>
<keyword id="KW-1015">Disulfide bond</keyword>
<keyword id="KW-0872">Ion channel impairing toxin</keyword>
<keyword id="KW-0528">Neurotoxin</keyword>
<keyword id="KW-1185">Reference proteome</keyword>
<keyword id="KW-0964">Secreted</keyword>
<keyword id="KW-0732">Signal</keyword>
<keyword id="KW-0800">Toxin</keyword>
<keyword id="KW-0738">Voltage-gated sodium channel impairing toxin</keyword>
<organism>
    <name type="scientific">Nematostella vectensis</name>
    <name type="common">Starlet sea anemone</name>
    <dbReference type="NCBI Taxonomy" id="45351"/>
    <lineage>
        <taxon>Eukaryota</taxon>
        <taxon>Metazoa</taxon>
        <taxon>Cnidaria</taxon>
        <taxon>Anthozoa</taxon>
        <taxon>Hexacorallia</taxon>
        <taxon>Actiniaria</taxon>
        <taxon>Edwardsiidae</taxon>
        <taxon>Nematostella</taxon>
    </lineage>
</organism>
<name>NA225_NEMVE</name>
<evidence type="ECO:0000250" key="1">
    <source>
        <dbReference type="UniProtKB" id="P19651"/>
    </source>
</evidence>
<evidence type="ECO:0000255" key="2"/>
<evidence type="ECO:0000269" key="3">
    <source>
    </source>
</evidence>
<evidence type="ECO:0000269" key="4">
    <source>
    </source>
</evidence>
<evidence type="ECO:0000269" key="5">
    <source>
    </source>
</evidence>
<evidence type="ECO:0000269" key="6">
    <source>
    </source>
</evidence>
<evidence type="ECO:0000303" key="7">
    <source>
    </source>
</evidence>
<evidence type="ECO:0000303" key="8">
    <source>
    </source>
</evidence>
<evidence type="ECO:0000303" key="9">
    <source>
    </source>
</evidence>
<evidence type="ECO:0000305" key="10"/>
<evidence type="ECO:0000305" key="11">
    <source>
    </source>
</evidence>
<evidence type="ECO:0000312" key="12">
    <source>
        <dbReference type="EMBL" id="ABW97340.1"/>
    </source>
</evidence>
<evidence type="ECO:0000312" key="13">
    <source>
        <dbReference type="EMBL" id="ABW97348.1"/>
    </source>
</evidence>
<reference key="1">
    <citation type="journal article" date="2008" name="Mol. Biol. Evol.">
        <title>Concerted evolution of sea anemone neurotoxin genes is revealed through analysis of the Nematostella vectensis genome.</title>
        <authorList>
            <person name="Moran Y."/>
            <person name="Weinberger H."/>
            <person name="Sullivan J.C."/>
            <person name="Reitzel A.M."/>
            <person name="Finnerty J.R."/>
            <person name="Gurevitz M."/>
        </authorList>
    </citation>
    <scope>NUCLEOTIDE SEQUENCE [GENOMIC DNA]</scope>
    <source>
        <strain>Crane Marsh</strain>
        <strain>Neponset River Marsh</strain>
    </source>
</reference>
<reference key="2">
    <citation type="journal article" date="2007" name="Science">
        <title>Sea anemone genome reveals ancestral eumetazoan gene repertoire and genomic organization.</title>
        <authorList>
            <person name="Putnam N.H."/>
            <person name="Srivastava M."/>
            <person name="Hellsten U."/>
            <person name="Dirks B."/>
            <person name="Chapman J."/>
            <person name="Salamov A."/>
            <person name="Terry A."/>
            <person name="Shapiro H."/>
            <person name="Lindquist E."/>
            <person name="Kapitonov V.V."/>
            <person name="Jurka J."/>
            <person name="Genikhovich G."/>
            <person name="Grigoriev I.V."/>
            <person name="Lucas S.M."/>
            <person name="Steele R.E."/>
            <person name="Finnerty J.R."/>
            <person name="Technau U."/>
            <person name="Martindale M.Q."/>
            <person name="Rokhsar D.S."/>
        </authorList>
    </citation>
    <scope>NUCLEOTIDE SEQUENCE [LARGE SCALE GENOMIC DNA]</scope>
    <source>
        <strain>CH2 X CH6</strain>
    </source>
</reference>
<reference key="3">
    <citation type="journal article" date="2008" name="J. Mol. Biol.">
        <title>Intron retention as a posttranscriptional regulatory mechanism of neurotoxin expression at early life stages of the starlet anemone Nematostella vectensis.</title>
        <authorList>
            <person name="Moran Y."/>
            <person name="Weinberger H."/>
            <person name="Reitzel A.M."/>
            <person name="Sullivan J.C."/>
            <person name="Kahn R."/>
            <person name="Gordon D."/>
            <person name="Finnerty J.R."/>
            <person name="Gurevitz M."/>
        </authorList>
    </citation>
    <scope>FUNCTION</scope>
    <scope>ALTERNATIVE SPLICING</scope>
    <scope>DEVELOPMENTAL STAGE</scope>
    <scope>TOXIC DOSE</scope>
    <source>
        <strain>Sippewissett Marsh</strain>
    </source>
</reference>
<reference key="4">
    <citation type="journal article" date="2012" name="Proc. R. Soc. B">
        <title>Neurotoxin localization to ectodermal gland cells uncovers an alternative mechanism of venom delivery in sea anemones.</title>
        <authorList>
            <person name="Moran Y."/>
            <person name="Genikhovich G."/>
            <person name="Gordon D."/>
            <person name="Wienkoop S."/>
            <person name="Zenkert C."/>
            <person name="Ozbek S."/>
            <person name="Technau U."/>
            <person name="Gurevitz M."/>
        </authorList>
    </citation>
    <scope>FUNCTION</scope>
    <scope>TISSUE SPECIFICITY</scope>
    <scope>DEVELOPMENTAL STAGE</scope>
</reference>
<reference key="5">
    <citation type="journal article" date="2012" name="Toxicon">
        <title>Development of a rational nomenclature for naming peptide and protein toxins from sea anemones.</title>
        <authorList>
            <person name="Oliveira J.S."/>
            <person name="Fuentes-Silva D."/>
            <person name="King G.F."/>
        </authorList>
    </citation>
    <scope>NOMENCLATURE</scope>
</reference>
<reference key="6">
    <citation type="journal article" date="2018" name="Elife">
        <title>Dynamics of venom composition across a complex life cycle.</title>
        <authorList>
            <person name="Columbus-Shenkar Y.Y."/>
            <person name="Sachkova M.Y."/>
            <person name="Macrander J."/>
            <person name="Fridrich A."/>
            <person name="Modepalli V."/>
            <person name="Reitzel A.M."/>
            <person name="Sunagar K."/>
            <person name="Moran Y."/>
        </authorList>
    </citation>
    <scope>FUNCTION</scope>
    <scope>DEVELOPMENTAL STAGE</scope>
</reference>
<reference key="7">
    <citation type="journal article" date="2019" name="Mol. Biol. Evol.">
        <title>The birth and death of toxins with distinct functions: a case study in the sea anemone Nematostella.</title>
        <authorList>
            <person name="Sachkova M.Y."/>
            <person name="Singer S.A."/>
            <person name="Macrander J."/>
            <person name="Reitzel A.M."/>
            <person name="Peigneur S."/>
            <person name="Tytgat J."/>
            <person name="Moran Y."/>
        </authorList>
    </citation>
    <scope>FUNCTION</scope>
    <scope>IDENTIFICATION BY MASS SPECTROMETRY</scope>
    <scope>DEVELOPMENTAL STAGE</scope>
</reference>
<comment type="function">
    <text evidence="3 4 5 6">Binds to site 3 of voltage-gated sodium channels and inhibits the inactivation process (PubMed:18538344). Is highly active on DmNav1/TipE (drosophila) and is only extremely weakly active on rat Nav1.4-beta-1/SCN4A-SCN1B, and on human Nav1.5-beta-1/SCN5A-beta-1 (PubMed:18538344). This reveals high specificity for arthropod over mammalian channels (PubMed:18538344). In vivo, when released into the medium, this recombinant toxin induces impaired swimming, paralysis and death of the crustacean A.nauplii within several hours (PubMed:22048953). Also causes paralysis of cherry shrimps immediately after injection at very low doses (PubMed:29424690). Its effect on zebrafish (D.rerio) larvae is also rapid, since it induces tail twitching accompanied by impaired swimming after 20 minutes and complete paralysis within 45 minutes (PubMed:22048953). It has also been observed to cause death of zebrafish larvae within 1 hour (PubMed:31134275).</text>
</comment>
<comment type="subcellular location">
    <subcellularLocation>
        <location evidence="3">Secreted</location>
    </subcellularLocation>
</comment>
<comment type="alternative products">
    <event type="alternative splicing"/>
    <isoform>
        <id>B1NWS4-1</id>
        <name>1</name>
        <sequence type="displayed"/>
    </isoform>
    <isoform>
        <id>B1NWS4-2</id>
        <name>2</name>
        <name>truncated</name>
        <sequence type="described" ref="VSP_039746"/>
    </isoform>
    <text>Intron retention discovered for all transcripts, no experimental confirmation available for this specific sequence.</text>
</comment>
<comment type="tissue specificity">
    <text evidence="4 5">Expressed in ectodermal glands and in clumps outside of the extodermal layer (PubMed:22048953). Is not expressed in nematocytes (PubMed:22048953). In adult female tissues, shows similar expression levels in mesenteries (gametes-producing tissue), tentacles, pharynx and physa (PubMed:29424690).</text>
</comment>
<comment type="developmental stage">
    <text evidence="3 4 5 6">Is detected in unfertilized eggs (at protein level) (PubMed:29424690, PubMed:31134275). Is also detected in late planulae, primary polyps and adults (both females and males) (at protein level) (PubMed:22048953, PubMed:29424690). Nv1 is transcribed throughout the complete life cycle and is found at multiple developmental stages including unfertilized eggs, blastulae, gastrulae, early planulae, planulae, metamorphosing planulae, primary polyps, juvenile polyps (2 and 4 months old), adult males, and adult females, with highest levels in juvenile polyps and adults (PubMed:18538344, PubMed:29424690). Importantly, Nv1 transcripts are not spliced in the embryo and planula due to intron retention and therefore Nv1 can be considered purely an adult toxin (PubMed:18538344).</text>
</comment>
<comment type="toxic dose">
    <text evidence="3">PD(50) is 76 nmol/kg into blowfly larvae.</text>
</comment>
<comment type="miscellaneous">
    <text>Nv1 toxin seems to be encoded by 8 different genes. 4 of them code for identical precursors, whereas 4 others code for very similar precursors. In the genome draft, 6 additional loci are also correlated to Nv1 toxin, but they are not predicted to be functional genes. This high similarity may be explained by concerted evolution.</text>
</comment>
<comment type="miscellaneous">
    <text evidence="10">The primary structure of the mature peptide is identical in 9 entries (AC B1NWS4, AC B1NWS1, AC B1NWR6, AC P0CH90, AC P0CH46, AC B1NWS8, AC A7SCE5, AC B1NWR7 and AC P0CH45).</text>
</comment>
<comment type="miscellaneous">
    <molecule>Isoform 2</molecule>
    <text evidence="10">Due to an intron retention observed only in early life stages (embryo and planula).</text>
</comment>
<comment type="miscellaneous">
    <text evidence="3">Negative results: has no activity on the rat brain channel Nav1.2a-beta-1/SCN2A-SCN1B.</text>
</comment>
<comment type="similarity">
    <text evidence="10">Belongs to the sea anemone sodium channel inhibitory toxin family. Type II subfamily.</text>
</comment>
<comment type="caution">
    <text evidence="10">This toxin precursor is identical to three other precursors (AC B1NWR6, AC P0CH46 and AC B1NWR7). AC B1NWR6 shows 8 variants that could also be associated with this gene.</text>
</comment>
<comment type="sequence caution" evidence="10">
    <conflict type="erroneous gene model prediction">
        <sequence resource="EMBL-CDS" id="EDO38672"/>
    </conflict>
</comment>
<accession>B1NWS4</accession>
<accession>A7SCE0</accession>
<accession>B1NWT2</accession>
<sequence length="85" mass="9268">MASFKIVIVCLALLVAVACARRRDMMSDDELDFHLSKRGIPCACDSDGPDIRSASLSGIVWMGSCPSGWKKCKSYYSIVADCCNQ</sequence>
<dbReference type="EMBL" id="EU124461">
    <property type="protein sequence ID" value="ABW97340.1"/>
    <property type="molecule type" value="Genomic_DNA"/>
</dbReference>
<dbReference type="EMBL" id="EU124469">
    <property type="protein sequence ID" value="ABW97348.1"/>
    <property type="molecule type" value="Genomic_DNA"/>
</dbReference>
<dbReference type="EMBL" id="DS469622">
    <property type="protein sequence ID" value="EDO38672.1"/>
    <property type="status" value="ALT_SEQ"/>
    <property type="molecule type" value="Genomic_DNA"/>
</dbReference>
<dbReference type="RefSeq" id="XP_001630733.1">
    <property type="nucleotide sequence ID" value="XM_001630683.1"/>
</dbReference>
<dbReference type="RefSeq" id="XP_001630735.1">
    <property type="nucleotide sequence ID" value="XM_001630685.1"/>
</dbReference>
<dbReference type="RefSeq" id="XP_001630737.1">
    <property type="nucleotide sequence ID" value="XM_001630687.1"/>
</dbReference>
<dbReference type="RefSeq" id="XP_001630739.1">
    <property type="nucleotide sequence ID" value="XM_001630689.1"/>
</dbReference>
<dbReference type="SMR" id="B1NWS4"/>
<dbReference type="HOGENOM" id="CLU_2944416_0_0_1"/>
<dbReference type="InParanoid" id="B1NWS4"/>
<dbReference type="PhylomeDB" id="B1NWS4"/>
<dbReference type="Proteomes" id="UP000001593">
    <property type="component" value="Unassembled WGS sequence"/>
</dbReference>
<dbReference type="GO" id="GO:0005576">
    <property type="term" value="C:extracellular region"/>
    <property type="evidence" value="ECO:0007669"/>
    <property type="project" value="UniProtKB-SubCell"/>
</dbReference>
<dbReference type="GO" id="GO:0017080">
    <property type="term" value="F:sodium channel regulator activity"/>
    <property type="evidence" value="ECO:0007669"/>
    <property type="project" value="UniProtKB-KW"/>
</dbReference>
<dbReference type="GO" id="GO:0090729">
    <property type="term" value="F:toxin activity"/>
    <property type="evidence" value="ECO:0007669"/>
    <property type="project" value="UniProtKB-KW"/>
</dbReference>
<dbReference type="Gene3D" id="2.20.20.10">
    <property type="entry name" value="Anthopleurin-A"/>
    <property type="match status" value="1"/>
</dbReference>
<dbReference type="InterPro" id="IPR023355">
    <property type="entry name" value="Myo_ane_neurotoxin_sf"/>
</dbReference>
<dbReference type="Pfam" id="PF00706">
    <property type="entry name" value="Toxin_4"/>
    <property type="match status" value="1"/>
</dbReference>
<dbReference type="SUPFAM" id="SSF57392">
    <property type="entry name" value="Defensin-like"/>
    <property type="match status" value="1"/>
</dbReference>
<gene>
    <name type="ORF">v1g113108</name>
</gene>
<proteinExistence type="evidence at protein level"/>